<name>M28P3_PYRTT</name>
<protein>
    <recommendedName>
        <fullName>Probable zinc metalloprotease PTT_17836</fullName>
        <ecNumber>3.4.-.-</ecNumber>
    </recommendedName>
</protein>
<comment type="cofactor">
    <cofactor evidence="1">
        <name>Zn(2+)</name>
        <dbReference type="ChEBI" id="CHEBI:29105"/>
    </cofactor>
    <text evidence="1">Binds 2 Zn(2+) ions per subunit.</text>
</comment>
<comment type="subcellular location">
    <subcellularLocation>
        <location evidence="4">Secreted</location>
    </subcellularLocation>
</comment>
<comment type="similarity">
    <text evidence="4">Belongs to the peptidase M28 family. M28B subfamily.</text>
</comment>
<sequence>MRSASTLAVCAATLLQIACSTPIHPFHARSHQSYPSTEQWPLPVVGKQLEHQVPDEDLQEILSQISRDNIESTIRKLASFGTRHTLSSQTDPVRGIGAARTWLTAKFQEAADESEGRMTVDWNSFIKYPGDNERIIFPVNITTVVATLKGSEDPDRYYLTGGHYDSRNSNPIDYQGDAPGAVDDASGVAVSLELARIFAHYKPKATIVFTAFAGEEQGLLGAQNLAQTYKNASVNLAAMINLDMVGNSKAEDGTTDPHNIRLFCQGTPLTENASTTTSRLSIGGDNDSPARNLGRFIYEVASNAWTEMTAGYTGVRFVQPNEDYTQQHQNVTVRNGKQYGDLTQWLDFEYNTRAAKVVASTMWSLANAPAAPTNVGVNTTMSDNFSQFKWDAPKGLSVQGYEILYRETIEPHWTNVIDLGNVTWYNLTSATIHKDNVIFGVRSVGKGGYKSPAVLPFPFGCARNC</sequence>
<accession>E3S5D4</accession>
<evidence type="ECO:0000250" key="1"/>
<evidence type="ECO:0000255" key="2"/>
<evidence type="ECO:0000255" key="3">
    <source>
        <dbReference type="PROSITE-ProRule" id="PRU00316"/>
    </source>
</evidence>
<evidence type="ECO:0000305" key="4"/>
<gene>
    <name type="ORF">PTT_17836</name>
</gene>
<dbReference type="EC" id="3.4.-.-"/>
<dbReference type="EMBL" id="GL537232">
    <property type="protein sequence ID" value="EFQ86802.1"/>
    <property type="molecule type" value="Genomic_DNA"/>
</dbReference>
<dbReference type="RefSeq" id="XP_003305089.1">
    <property type="nucleotide sequence ID" value="XM_003305041.1"/>
</dbReference>
<dbReference type="SMR" id="E3S5D4"/>
<dbReference type="EnsemblFungi" id="EFQ86802">
    <property type="protein sequence ID" value="EFQ86802"/>
    <property type="gene ID" value="PTT_17836"/>
</dbReference>
<dbReference type="KEGG" id="pte:PTT_17836"/>
<dbReference type="eggNOG" id="KOG2195">
    <property type="taxonomic scope" value="Eukaryota"/>
</dbReference>
<dbReference type="HOGENOM" id="CLU_047420_0_0_1"/>
<dbReference type="OrthoDB" id="10013407at2759"/>
<dbReference type="Proteomes" id="UP000001067">
    <property type="component" value="Unassembled WGS sequence"/>
</dbReference>
<dbReference type="GO" id="GO:0005576">
    <property type="term" value="C:extracellular region"/>
    <property type="evidence" value="ECO:0007669"/>
    <property type="project" value="UniProtKB-SubCell"/>
</dbReference>
<dbReference type="GO" id="GO:0046872">
    <property type="term" value="F:metal ion binding"/>
    <property type="evidence" value="ECO:0007669"/>
    <property type="project" value="UniProtKB-KW"/>
</dbReference>
<dbReference type="GO" id="GO:0008235">
    <property type="term" value="F:metalloexopeptidase activity"/>
    <property type="evidence" value="ECO:0007669"/>
    <property type="project" value="InterPro"/>
</dbReference>
<dbReference type="GO" id="GO:0006508">
    <property type="term" value="P:proteolysis"/>
    <property type="evidence" value="ECO:0007669"/>
    <property type="project" value="UniProtKB-KW"/>
</dbReference>
<dbReference type="CDD" id="cd00063">
    <property type="entry name" value="FN3"/>
    <property type="match status" value="1"/>
</dbReference>
<dbReference type="Gene3D" id="2.60.40.10">
    <property type="entry name" value="Immunoglobulins"/>
    <property type="match status" value="1"/>
</dbReference>
<dbReference type="Gene3D" id="3.40.630.10">
    <property type="entry name" value="Zn peptidases"/>
    <property type="match status" value="1"/>
</dbReference>
<dbReference type="InterPro" id="IPR003961">
    <property type="entry name" value="FN3_dom"/>
</dbReference>
<dbReference type="InterPro" id="IPR036116">
    <property type="entry name" value="FN3_sf"/>
</dbReference>
<dbReference type="InterPro" id="IPR013783">
    <property type="entry name" value="Ig-like_fold"/>
</dbReference>
<dbReference type="InterPro" id="IPR045175">
    <property type="entry name" value="M28_fam"/>
</dbReference>
<dbReference type="InterPro" id="IPR007484">
    <property type="entry name" value="Peptidase_M28"/>
</dbReference>
<dbReference type="PANTHER" id="PTHR12147">
    <property type="entry name" value="METALLOPEPTIDASE M28 FAMILY MEMBER"/>
    <property type="match status" value="1"/>
</dbReference>
<dbReference type="PANTHER" id="PTHR12147:SF26">
    <property type="entry name" value="PEPTIDASE M28 DOMAIN-CONTAINING PROTEIN"/>
    <property type="match status" value="1"/>
</dbReference>
<dbReference type="Pfam" id="PF04389">
    <property type="entry name" value="Peptidase_M28"/>
    <property type="match status" value="1"/>
</dbReference>
<dbReference type="SUPFAM" id="SSF49265">
    <property type="entry name" value="Fibronectin type III"/>
    <property type="match status" value="1"/>
</dbReference>
<dbReference type="SUPFAM" id="SSF53187">
    <property type="entry name" value="Zn-dependent exopeptidases"/>
    <property type="match status" value="1"/>
</dbReference>
<dbReference type="PROSITE" id="PS50853">
    <property type="entry name" value="FN3"/>
    <property type="match status" value="1"/>
</dbReference>
<keyword id="KW-0325">Glycoprotein</keyword>
<keyword id="KW-0378">Hydrolase</keyword>
<keyword id="KW-0479">Metal-binding</keyword>
<keyword id="KW-0482">Metalloprotease</keyword>
<keyword id="KW-0645">Protease</keyword>
<keyword id="KW-1185">Reference proteome</keyword>
<keyword id="KW-0964">Secreted</keyword>
<keyword id="KW-0732">Signal</keyword>
<keyword id="KW-0862">Zinc</keyword>
<organism>
    <name type="scientific">Pyrenophora teres f. teres (strain 0-1)</name>
    <name type="common">Barley net blotch fungus</name>
    <name type="synonym">Drechslera teres f. teres</name>
    <dbReference type="NCBI Taxonomy" id="861557"/>
    <lineage>
        <taxon>Eukaryota</taxon>
        <taxon>Fungi</taxon>
        <taxon>Dikarya</taxon>
        <taxon>Ascomycota</taxon>
        <taxon>Pezizomycotina</taxon>
        <taxon>Dothideomycetes</taxon>
        <taxon>Pleosporomycetidae</taxon>
        <taxon>Pleosporales</taxon>
        <taxon>Pleosporineae</taxon>
        <taxon>Pleosporaceae</taxon>
        <taxon>Pyrenophora</taxon>
    </lineage>
</organism>
<proteinExistence type="inferred from homology"/>
<feature type="signal peptide" evidence="2">
    <location>
        <begin position="1"/>
        <end position="20"/>
    </location>
</feature>
<feature type="chain" id="PRO_0000411768" description="Probable zinc metalloprotease PTT_17836">
    <location>
        <begin position="21"/>
        <end position="465"/>
    </location>
</feature>
<feature type="domain" description="Fibronectin type-III" evidence="3">
    <location>
        <begin position="371"/>
        <end position="464"/>
    </location>
</feature>
<feature type="binding site" evidence="1">
    <location>
        <position position="163"/>
    </location>
    <ligand>
        <name>Zn(2+)</name>
        <dbReference type="ChEBI" id="CHEBI:29105"/>
        <label>1</label>
    </ligand>
</feature>
<feature type="binding site" evidence="1">
    <location>
        <position position="183"/>
    </location>
    <ligand>
        <name>Zn(2+)</name>
        <dbReference type="ChEBI" id="CHEBI:29105"/>
        <label>1</label>
    </ligand>
</feature>
<feature type="binding site" evidence="1">
    <location>
        <position position="183"/>
    </location>
    <ligand>
        <name>Zn(2+)</name>
        <dbReference type="ChEBI" id="CHEBI:29105"/>
        <label>2</label>
        <note>catalytic</note>
    </ligand>
</feature>
<feature type="binding site" evidence="1">
    <location>
        <position position="216"/>
    </location>
    <ligand>
        <name>Zn(2+)</name>
        <dbReference type="ChEBI" id="CHEBI:29105"/>
        <label>2</label>
        <note>catalytic</note>
    </ligand>
</feature>
<feature type="binding site" evidence="1">
    <location>
        <position position="243"/>
    </location>
    <ligand>
        <name>Zn(2+)</name>
        <dbReference type="ChEBI" id="CHEBI:29105"/>
        <label>1</label>
    </ligand>
</feature>
<feature type="glycosylation site" description="N-linked (GlcNAc...) asparagine" evidence="2">
    <location>
        <position position="140"/>
    </location>
</feature>
<feature type="glycosylation site" description="N-linked (GlcNAc...) asparagine" evidence="2">
    <location>
        <position position="231"/>
    </location>
</feature>
<feature type="glycosylation site" description="N-linked (GlcNAc...) asparagine" evidence="2">
    <location>
        <position position="272"/>
    </location>
</feature>
<feature type="glycosylation site" description="N-linked (GlcNAc...) asparagine" evidence="2">
    <location>
        <position position="330"/>
    </location>
</feature>
<feature type="glycosylation site" description="N-linked (GlcNAc...) asparagine" evidence="2">
    <location>
        <position position="378"/>
    </location>
</feature>
<feature type="glycosylation site" description="N-linked (GlcNAc...) asparagine" evidence="2">
    <location>
        <position position="384"/>
    </location>
</feature>
<feature type="glycosylation site" description="N-linked (GlcNAc...) asparagine" evidence="2">
    <location>
        <position position="421"/>
    </location>
</feature>
<feature type="glycosylation site" description="N-linked (GlcNAc...) asparagine" evidence="2">
    <location>
        <position position="426"/>
    </location>
</feature>
<reference key="1">
    <citation type="journal article" date="2010" name="Genome Biol.">
        <title>A first genome assembly of the barley fungal pathogen Pyrenophora teres f. teres.</title>
        <authorList>
            <person name="Ellwood S.R."/>
            <person name="Liu Z."/>
            <person name="Syme R.A."/>
            <person name="Lai Z."/>
            <person name="Hane J.K."/>
            <person name="Keiper F."/>
            <person name="Moffat C.S."/>
            <person name="Oliver R.P."/>
            <person name="Friesen T.L."/>
        </authorList>
    </citation>
    <scope>NUCLEOTIDE SEQUENCE [LARGE SCALE GENOMIC DNA]</scope>
    <source>
        <strain>0-1</strain>
    </source>
</reference>